<organism>
    <name type="scientific">Bacillus subtilis (strain 168)</name>
    <dbReference type="NCBI Taxonomy" id="224308"/>
    <lineage>
        <taxon>Bacteria</taxon>
        <taxon>Bacillati</taxon>
        <taxon>Bacillota</taxon>
        <taxon>Bacilli</taxon>
        <taxon>Bacillales</taxon>
        <taxon>Bacillaceae</taxon>
        <taxon>Bacillus</taxon>
    </lineage>
</organism>
<sequence>MERAFQNRCEPRAAKPFKILKKRSTTSVASYQVSPHTARIFKENERLIDEYKRKKA</sequence>
<evidence type="ECO:0000269" key="1">
    <source>
    </source>
</evidence>
<evidence type="ECO:0000269" key="2">
    <source>
    </source>
</evidence>
<evidence type="ECO:0000305" key="3"/>
<evidence type="ECO:0007829" key="4">
    <source>
        <dbReference type="PDB" id="3O6Q"/>
    </source>
</evidence>
<dbReference type="EMBL" id="AJ002571">
    <property type="protein sequence ID" value="CAA05562.1"/>
    <property type="molecule type" value="Genomic_DNA"/>
</dbReference>
<dbReference type="EMBL" id="AL009126">
    <property type="protein sequence ID" value="CAB13139.1"/>
    <property type="molecule type" value="Genomic_DNA"/>
</dbReference>
<dbReference type="PIR" id="E69713">
    <property type="entry name" value="E69713"/>
</dbReference>
<dbReference type="RefSeq" id="NP_389165.1">
    <property type="nucleotide sequence ID" value="NC_000964.3"/>
</dbReference>
<dbReference type="RefSeq" id="WP_003232646.1">
    <property type="nucleotide sequence ID" value="NZ_OZ025638.1"/>
</dbReference>
<dbReference type="PDB" id="3O6Q">
    <property type="method" value="X-ray"/>
    <property type="resolution" value="2.50 A"/>
    <property type="chains" value="B/D=1-56"/>
</dbReference>
<dbReference type="PDBsum" id="3O6Q"/>
<dbReference type="SMR" id="O34800"/>
<dbReference type="FunCoup" id="O34800">
    <property type="interactions" value="65"/>
</dbReference>
<dbReference type="IntAct" id="O34800">
    <property type="interactions" value="1"/>
</dbReference>
<dbReference type="STRING" id="224308.BSU12820"/>
<dbReference type="PaxDb" id="224308-BSU12820"/>
<dbReference type="EnsemblBacteria" id="CAB13139">
    <property type="protein sequence ID" value="CAB13139"/>
    <property type="gene ID" value="BSU_12820"/>
</dbReference>
<dbReference type="GeneID" id="938005"/>
<dbReference type="KEGG" id="bsu:BSU12820"/>
<dbReference type="PATRIC" id="fig|224308.179.peg.1391"/>
<dbReference type="eggNOG" id="ENOG5030D7K">
    <property type="taxonomic scope" value="Bacteria"/>
</dbReference>
<dbReference type="InParanoid" id="O34800"/>
<dbReference type="OrthoDB" id="2929672at2"/>
<dbReference type="BioCyc" id="BSUB:BSU12820-MONOMER"/>
<dbReference type="Proteomes" id="UP000001570">
    <property type="component" value="Chromosome"/>
</dbReference>
<dbReference type="GO" id="GO:0097351">
    <property type="term" value="F:toxin sequestering activity"/>
    <property type="evidence" value="ECO:0000315"/>
    <property type="project" value="DisProt"/>
</dbReference>
<dbReference type="GO" id="GO:0030435">
    <property type="term" value="P:sporulation resulting in formation of a cellular spore"/>
    <property type="evidence" value="ECO:0007669"/>
    <property type="project" value="UniProtKB-KW"/>
</dbReference>
<dbReference type="DisProt" id="DP01146"/>
<dbReference type="Gene3D" id="1.20.5.740">
    <property type="entry name" value="Single helix bin"/>
    <property type="match status" value="1"/>
</dbReference>
<dbReference type="InterPro" id="IPR025897">
    <property type="entry name" value="Antitoxin_SpoIISB"/>
</dbReference>
<dbReference type="Pfam" id="PF14185">
    <property type="entry name" value="SpoIISB_antitox"/>
    <property type="match status" value="1"/>
</dbReference>
<name>SP2SB_BACSU</name>
<protein>
    <recommendedName>
        <fullName>Stage II sporulation protein SB</fullName>
    </recommendedName>
    <alternativeName>
        <fullName>Antidote protein SpoIISB</fullName>
    </alternativeName>
    <alternativeName>
        <fullName>Antitoxin SpoIISB</fullName>
    </alternativeName>
</protein>
<proteinExistence type="evidence at protein level"/>
<reference key="1">
    <citation type="submission" date="1997-11" db="EMBL/GenBank/DDBJ databases">
        <title>Sequence of the Bacillus subtilis genome between xlyA and ykoR.</title>
        <authorList>
            <person name="Devine K.M."/>
        </authorList>
    </citation>
    <scope>NUCLEOTIDE SEQUENCE [GENOMIC DNA]</scope>
    <source>
        <strain>168</strain>
    </source>
</reference>
<reference key="2">
    <citation type="journal article" date="1997" name="Nature">
        <title>The complete genome sequence of the Gram-positive bacterium Bacillus subtilis.</title>
        <authorList>
            <person name="Kunst F."/>
            <person name="Ogasawara N."/>
            <person name="Moszer I."/>
            <person name="Albertini A.M."/>
            <person name="Alloni G."/>
            <person name="Azevedo V."/>
            <person name="Bertero M.G."/>
            <person name="Bessieres P."/>
            <person name="Bolotin A."/>
            <person name="Borchert S."/>
            <person name="Borriss R."/>
            <person name="Boursier L."/>
            <person name="Brans A."/>
            <person name="Braun M."/>
            <person name="Brignell S.C."/>
            <person name="Bron S."/>
            <person name="Brouillet S."/>
            <person name="Bruschi C.V."/>
            <person name="Caldwell B."/>
            <person name="Capuano V."/>
            <person name="Carter N.M."/>
            <person name="Choi S.-K."/>
            <person name="Codani J.-J."/>
            <person name="Connerton I.F."/>
            <person name="Cummings N.J."/>
            <person name="Daniel R.A."/>
            <person name="Denizot F."/>
            <person name="Devine K.M."/>
            <person name="Duesterhoeft A."/>
            <person name="Ehrlich S.D."/>
            <person name="Emmerson P.T."/>
            <person name="Entian K.-D."/>
            <person name="Errington J."/>
            <person name="Fabret C."/>
            <person name="Ferrari E."/>
            <person name="Foulger D."/>
            <person name="Fritz C."/>
            <person name="Fujita M."/>
            <person name="Fujita Y."/>
            <person name="Fuma S."/>
            <person name="Galizzi A."/>
            <person name="Galleron N."/>
            <person name="Ghim S.-Y."/>
            <person name="Glaser P."/>
            <person name="Goffeau A."/>
            <person name="Golightly E.J."/>
            <person name="Grandi G."/>
            <person name="Guiseppi G."/>
            <person name="Guy B.J."/>
            <person name="Haga K."/>
            <person name="Haiech J."/>
            <person name="Harwood C.R."/>
            <person name="Henaut A."/>
            <person name="Hilbert H."/>
            <person name="Holsappel S."/>
            <person name="Hosono S."/>
            <person name="Hullo M.-F."/>
            <person name="Itaya M."/>
            <person name="Jones L.-M."/>
            <person name="Joris B."/>
            <person name="Karamata D."/>
            <person name="Kasahara Y."/>
            <person name="Klaerr-Blanchard M."/>
            <person name="Klein C."/>
            <person name="Kobayashi Y."/>
            <person name="Koetter P."/>
            <person name="Koningstein G."/>
            <person name="Krogh S."/>
            <person name="Kumano M."/>
            <person name="Kurita K."/>
            <person name="Lapidus A."/>
            <person name="Lardinois S."/>
            <person name="Lauber J."/>
            <person name="Lazarevic V."/>
            <person name="Lee S.-M."/>
            <person name="Levine A."/>
            <person name="Liu H."/>
            <person name="Masuda S."/>
            <person name="Mauel C."/>
            <person name="Medigue C."/>
            <person name="Medina N."/>
            <person name="Mellado R.P."/>
            <person name="Mizuno M."/>
            <person name="Moestl D."/>
            <person name="Nakai S."/>
            <person name="Noback M."/>
            <person name="Noone D."/>
            <person name="O'Reilly M."/>
            <person name="Ogawa K."/>
            <person name="Ogiwara A."/>
            <person name="Oudega B."/>
            <person name="Park S.-H."/>
            <person name="Parro V."/>
            <person name="Pohl T.M."/>
            <person name="Portetelle D."/>
            <person name="Porwollik S."/>
            <person name="Prescott A.M."/>
            <person name="Presecan E."/>
            <person name="Pujic P."/>
            <person name="Purnelle B."/>
            <person name="Rapoport G."/>
            <person name="Rey M."/>
            <person name="Reynolds S."/>
            <person name="Rieger M."/>
            <person name="Rivolta C."/>
            <person name="Rocha E."/>
            <person name="Roche B."/>
            <person name="Rose M."/>
            <person name="Sadaie Y."/>
            <person name="Sato T."/>
            <person name="Scanlan E."/>
            <person name="Schleich S."/>
            <person name="Schroeter R."/>
            <person name="Scoffone F."/>
            <person name="Sekiguchi J."/>
            <person name="Sekowska A."/>
            <person name="Seror S.J."/>
            <person name="Serror P."/>
            <person name="Shin B.-S."/>
            <person name="Soldo B."/>
            <person name="Sorokin A."/>
            <person name="Tacconi E."/>
            <person name="Takagi T."/>
            <person name="Takahashi H."/>
            <person name="Takemaru K."/>
            <person name="Takeuchi M."/>
            <person name="Tamakoshi A."/>
            <person name="Tanaka T."/>
            <person name="Terpstra P."/>
            <person name="Tognoni A."/>
            <person name="Tosato V."/>
            <person name="Uchiyama S."/>
            <person name="Vandenbol M."/>
            <person name="Vannier F."/>
            <person name="Vassarotti A."/>
            <person name="Viari A."/>
            <person name="Wambutt R."/>
            <person name="Wedler E."/>
            <person name="Wedler H."/>
            <person name="Weitzenegger T."/>
            <person name="Winters P."/>
            <person name="Wipat A."/>
            <person name="Yamamoto H."/>
            <person name="Yamane K."/>
            <person name="Yasumoto K."/>
            <person name="Yata K."/>
            <person name="Yoshida K."/>
            <person name="Yoshikawa H.-F."/>
            <person name="Zumstein E."/>
            <person name="Yoshikawa H."/>
            <person name="Danchin A."/>
        </authorList>
    </citation>
    <scope>NUCLEOTIDE SEQUENCE [LARGE SCALE GENOMIC DNA]</scope>
    <source>
        <strain>168</strain>
    </source>
</reference>
<reference key="3">
    <citation type="journal article" date="2001" name="J. Bacteriol.">
        <title>Bacillus subtilis locus encoding a killer protein and its antidote.</title>
        <authorList>
            <person name="Adler E."/>
            <person name="Barak I."/>
            <person name="Stragier P."/>
        </authorList>
    </citation>
    <scope>FUNCTION AS AN ANTITOXIN</scope>
    <scope>INDUCTION</scope>
    <scope>DISRUPTION PHENOTYPE</scope>
    <source>
        <strain>168 / JH642</strain>
    </source>
</reference>
<reference key="4">
    <citation type="journal article" date="2008" name="FEMS Microbiol. Lett.">
        <title>Expression of functional Bacillus SpoIISAB toxin-antitoxin modules in Escherichia coli.</title>
        <authorList>
            <person name="Florek P."/>
            <person name="Muchova K."/>
            <person name="Pavelcikova P."/>
            <person name="Barak I."/>
        </authorList>
    </citation>
    <scope>EXPRESSION IN E.COLI</scope>
    <source>
        <strain>168 / JH642</strain>
    </source>
</reference>
<reference key="5">
    <citation type="journal article" date="2011" name="J. Biol. Chem.">
        <title>The structure and interactions of SpoIISA and SpoIISB, a toxin-antitoxin system in Bacillus subtilis.</title>
        <authorList>
            <person name="Florek P."/>
            <person name="Levdikov V.M."/>
            <person name="Blagova E."/>
            <person name="Lebedev A.A."/>
            <person name="Skrabana R."/>
            <person name="Resetarova S."/>
            <person name="Pavelcikova P."/>
            <person name="Barak I."/>
            <person name="Wilkinson A.J."/>
        </authorList>
    </citation>
    <scope>X-RAY CRYSTALLOGRAPHY (2.5 ANGSTROMS)</scope>
    <scope>INTERACTION WITH SPOIISA</scope>
    <scope>MUTAGENESIS OF 1-MET--ARG-12 AND 53-ARG--ALA-56</scope>
    <source>
        <strain>168 / PY79</strain>
    </source>
</reference>
<feature type="chain" id="PRO_0000072063" description="Stage II sporulation protein SB">
    <location>
        <begin position="1"/>
        <end position="56"/>
    </location>
</feature>
<feature type="mutagenesis site" description="No loss of antitoxin activity." evidence="2">
    <original>MERAFQNRCEPR</original>
    <variation>MA</variation>
    <location>
        <begin position="1"/>
        <end position="12"/>
    </location>
</feature>
<feature type="mutagenesis site" description="Significant loss of antitoxin activity." evidence="2">
    <location>
        <begin position="53"/>
        <end position="56"/>
    </location>
</feature>
<feature type="strand" evidence="4">
    <location>
        <begin position="17"/>
        <end position="21"/>
    </location>
</feature>
<feature type="strand" evidence="4">
    <location>
        <begin position="25"/>
        <end position="28"/>
    </location>
</feature>
<feature type="helix" evidence="4">
    <location>
        <begin position="35"/>
        <end position="48"/>
    </location>
</feature>
<comment type="function">
    <text evidence="1">Antitoxin component of a type II toxin-antitoxin (TA) system. Antitoxin that binds cognate toxin SpoIISA and neutralizes its toxic activity; unlike most antitoxins it does not seem to be highly labile upon expression in E.coli.</text>
</comment>
<comment type="subunit">
    <text>The isolated protein is unfolded; X-ray data suggests the inactive complex forms a heterotetramer of SpoIISA(2)-SpoIISB(2), which inactivates the toxic activity of SpoIISA.</text>
</comment>
<comment type="interaction">
    <interactant intactId="EBI-4406141">
        <id>O34800</id>
    </interactant>
    <interactant intactId="EBI-4406150">
        <id>O34853</id>
        <label>spoIISA</label>
    </interactant>
    <organismsDiffer>false</organismsDiffer>
    <experiments>3</experiments>
</comment>
<comment type="induction">
    <text evidence="1">Expressed during exponential growth and sporulation. A member of the spoIISA-spoIISB operon, it also has its own promoter.</text>
</comment>
<comment type="disruption phenotype">
    <text evidence="1">Decreases sporulation efficiency by 4 orders of magnitude. A double spoIISA-spoIISB disruption sporulates normally, suggesting its only role is to neutralize SpoIISA.</text>
</comment>
<comment type="similarity">
    <text evidence="3">Belongs to the SpoIISB antitoxin family.</text>
</comment>
<gene>
    <name type="primary">spoIISB</name>
    <name type="ordered locus">BSU12820</name>
</gene>
<accession>O34800</accession>
<keyword id="KW-0002">3D-structure</keyword>
<keyword id="KW-1185">Reference proteome</keyword>
<keyword id="KW-0749">Sporulation</keyword>
<keyword id="KW-1277">Toxin-antitoxin system</keyword>